<dbReference type="EC" id="2.1.2.10" evidence="1"/>
<dbReference type="EMBL" id="CP000967">
    <property type="protein sequence ID" value="ACD59740.1"/>
    <property type="molecule type" value="Genomic_DNA"/>
</dbReference>
<dbReference type="RefSeq" id="WP_012445292.1">
    <property type="nucleotide sequence ID" value="NC_010717.2"/>
</dbReference>
<dbReference type="SMR" id="B2SSQ1"/>
<dbReference type="KEGG" id="xop:PXO_01654"/>
<dbReference type="eggNOG" id="COG0404">
    <property type="taxonomic scope" value="Bacteria"/>
</dbReference>
<dbReference type="HOGENOM" id="CLU_007884_10_2_6"/>
<dbReference type="Proteomes" id="UP000001740">
    <property type="component" value="Chromosome"/>
</dbReference>
<dbReference type="GO" id="GO:0005829">
    <property type="term" value="C:cytosol"/>
    <property type="evidence" value="ECO:0007669"/>
    <property type="project" value="TreeGrafter"/>
</dbReference>
<dbReference type="GO" id="GO:0005960">
    <property type="term" value="C:glycine cleavage complex"/>
    <property type="evidence" value="ECO:0007669"/>
    <property type="project" value="InterPro"/>
</dbReference>
<dbReference type="GO" id="GO:0004047">
    <property type="term" value="F:aminomethyltransferase activity"/>
    <property type="evidence" value="ECO:0007669"/>
    <property type="project" value="UniProtKB-UniRule"/>
</dbReference>
<dbReference type="GO" id="GO:0008483">
    <property type="term" value="F:transaminase activity"/>
    <property type="evidence" value="ECO:0007669"/>
    <property type="project" value="UniProtKB-KW"/>
</dbReference>
<dbReference type="GO" id="GO:0019464">
    <property type="term" value="P:glycine decarboxylation via glycine cleavage system"/>
    <property type="evidence" value="ECO:0007669"/>
    <property type="project" value="UniProtKB-UniRule"/>
</dbReference>
<dbReference type="FunFam" id="2.40.30.110:FF:000001">
    <property type="entry name" value="Aminomethyltransferase"/>
    <property type="match status" value="1"/>
</dbReference>
<dbReference type="FunFam" id="3.30.70.1400:FF:000001">
    <property type="entry name" value="Aminomethyltransferase"/>
    <property type="match status" value="1"/>
</dbReference>
<dbReference type="FunFam" id="4.10.1250.10:FF:000001">
    <property type="entry name" value="Aminomethyltransferase"/>
    <property type="match status" value="1"/>
</dbReference>
<dbReference type="Gene3D" id="2.40.30.110">
    <property type="entry name" value="Aminomethyltransferase beta-barrel domains"/>
    <property type="match status" value="1"/>
</dbReference>
<dbReference type="Gene3D" id="3.30.70.1400">
    <property type="entry name" value="Aminomethyltransferase beta-barrel domains"/>
    <property type="match status" value="1"/>
</dbReference>
<dbReference type="Gene3D" id="4.10.1250.10">
    <property type="entry name" value="Aminomethyltransferase fragment"/>
    <property type="match status" value="1"/>
</dbReference>
<dbReference type="Gene3D" id="3.30.1360.120">
    <property type="entry name" value="Probable tRNA modification gtpase trme, domain 1"/>
    <property type="match status" value="1"/>
</dbReference>
<dbReference type="HAMAP" id="MF_00259">
    <property type="entry name" value="GcvT"/>
    <property type="match status" value="1"/>
</dbReference>
<dbReference type="InterPro" id="IPR006223">
    <property type="entry name" value="GCS_T"/>
</dbReference>
<dbReference type="InterPro" id="IPR022903">
    <property type="entry name" value="GCS_T_bac"/>
</dbReference>
<dbReference type="InterPro" id="IPR013977">
    <property type="entry name" value="GCST_C"/>
</dbReference>
<dbReference type="InterPro" id="IPR006222">
    <property type="entry name" value="GCV_T_N"/>
</dbReference>
<dbReference type="InterPro" id="IPR028896">
    <property type="entry name" value="GcvT/YgfZ/DmdA"/>
</dbReference>
<dbReference type="InterPro" id="IPR029043">
    <property type="entry name" value="GcvT/YgfZ_C"/>
</dbReference>
<dbReference type="InterPro" id="IPR027266">
    <property type="entry name" value="TrmE/GcvT_dom1"/>
</dbReference>
<dbReference type="NCBIfam" id="TIGR00528">
    <property type="entry name" value="gcvT"/>
    <property type="match status" value="1"/>
</dbReference>
<dbReference type="NCBIfam" id="NF001567">
    <property type="entry name" value="PRK00389.1"/>
    <property type="match status" value="1"/>
</dbReference>
<dbReference type="PANTHER" id="PTHR43757">
    <property type="entry name" value="AMINOMETHYLTRANSFERASE"/>
    <property type="match status" value="1"/>
</dbReference>
<dbReference type="PANTHER" id="PTHR43757:SF2">
    <property type="entry name" value="AMINOMETHYLTRANSFERASE, MITOCHONDRIAL"/>
    <property type="match status" value="1"/>
</dbReference>
<dbReference type="Pfam" id="PF01571">
    <property type="entry name" value="GCV_T"/>
    <property type="match status" value="1"/>
</dbReference>
<dbReference type="Pfam" id="PF08669">
    <property type="entry name" value="GCV_T_C"/>
    <property type="match status" value="1"/>
</dbReference>
<dbReference type="PIRSF" id="PIRSF006487">
    <property type="entry name" value="GcvT"/>
    <property type="match status" value="1"/>
</dbReference>
<dbReference type="SUPFAM" id="SSF101790">
    <property type="entry name" value="Aminomethyltransferase beta-barrel domain"/>
    <property type="match status" value="1"/>
</dbReference>
<dbReference type="SUPFAM" id="SSF103025">
    <property type="entry name" value="Folate-binding domain"/>
    <property type="match status" value="1"/>
</dbReference>
<sequence length="369" mass="40285">MTQKTILNDTHRALGAKMVDFGGWDMPIHYGSQLDEHHQVRRDAGMFDVSHMTVVDLHGARVRAFLRDLLANSVDKLKVCGKALYTCMLNPQGGVIDDLIVYYMSEDFFRLVVNAATREKDLQWIGEQAVRFDVRVEERSDFAMIAVQGPNARANVIDLLDPADTAAASKLGRFAALQTRSRDGIELFLARTGYTGEDGFEIVLPQEAAVAFWNALLAQGVKPAGLGARDTLRLEAGMHLYGQDMDDAVTPYEAALAWTIALDEGRDFIGRRVLESQKAQGAPCQLIGVVMDDKGVLRHGQAVFTASGEGEILSGTFSPTLGKAIAFARVPAGSIDQLRVDIRGKQVPLRAVKFPFVRDGQAQPGVLGD</sequence>
<keyword id="KW-0032">Aminotransferase</keyword>
<keyword id="KW-0808">Transferase</keyword>
<organism>
    <name type="scientific">Xanthomonas oryzae pv. oryzae (strain PXO99A)</name>
    <dbReference type="NCBI Taxonomy" id="360094"/>
    <lineage>
        <taxon>Bacteria</taxon>
        <taxon>Pseudomonadati</taxon>
        <taxon>Pseudomonadota</taxon>
        <taxon>Gammaproteobacteria</taxon>
        <taxon>Lysobacterales</taxon>
        <taxon>Lysobacteraceae</taxon>
        <taxon>Xanthomonas</taxon>
    </lineage>
</organism>
<reference key="1">
    <citation type="journal article" date="2008" name="BMC Genomics">
        <title>Genome sequence and rapid evolution of the rice pathogen Xanthomonas oryzae pv. oryzae PXO99A.</title>
        <authorList>
            <person name="Salzberg S.L."/>
            <person name="Sommer D.D."/>
            <person name="Schatz M.C."/>
            <person name="Phillippy A.M."/>
            <person name="Rabinowicz P.D."/>
            <person name="Tsuge S."/>
            <person name="Furutani A."/>
            <person name="Ochiai H."/>
            <person name="Delcher A.L."/>
            <person name="Kelley D."/>
            <person name="Madupu R."/>
            <person name="Puiu D."/>
            <person name="Radune D."/>
            <person name="Shumway M."/>
            <person name="Trapnell C."/>
            <person name="Aparna G."/>
            <person name="Jha G."/>
            <person name="Pandey A."/>
            <person name="Patil P.B."/>
            <person name="Ishihara H."/>
            <person name="Meyer D.F."/>
            <person name="Szurek B."/>
            <person name="Verdier V."/>
            <person name="Koebnik R."/>
            <person name="Dow J.M."/>
            <person name="Ryan R.P."/>
            <person name="Hirata H."/>
            <person name="Tsuyumu S."/>
            <person name="Won Lee S."/>
            <person name="Seo Y.-S."/>
            <person name="Sriariyanum M."/>
            <person name="Ronald P.C."/>
            <person name="Sonti R.V."/>
            <person name="Van Sluys M.-A."/>
            <person name="Leach J.E."/>
            <person name="White F.F."/>
            <person name="Bogdanove A.J."/>
        </authorList>
    </citation>
    <scope>NUCLEOTIDE SEQUENCE [LARGE SCALE GENOMIC DNA]</scope>
    <source>
        <strain>PXO99A</strain>
    </source>
</reference>
<proteinExistence type="inferred from homology"/>
<protein>
    <recommendedName>
        <fullName evidence="1">Aminomethyltransferase</fullName>
        <ecNumber evidence="1">2.1.2.10</ecNumber>
    </recommendedName>
    <alternativeName>
        <fullName evidence="1">Glycine cleavage system T protein</fullName>
    </alternativeName>
</protein>
<comment type="function">
    <text evidence="1">The glycine cleavage system catalyzes the degradation of glycine.</text>
</comment>
<comment type="catalytic activity">
    <reaction evidence="1">
        <text>N(6)-[(R)-S(8)-aminomethyldihydrolipoyl]-L-lysyl-[protein] + (6S)-5,6,7,8-tetrahydrofolate = N(6)-[(R)-dihydrolipoyl]-L-lysyl-[protein] + (6R)-5,10-methylene-5,6,7,8-tetrahydrofolate + NH4(+)</text>
        <dbReference type="Rhea" id="RHEA:16945"/>
        <dbReference type="Rhea" id="RHEA-COMP:10475"/>
        <dbReference type="Rhea" id="RHEA-COMP:10492"/>
        <dbReference type="ChEBI" id="CHEBI:15636"/>
        <dbReference type="ChEBI" id="CHEBI:28938"/>
        <dbReference type="ChEBI" id="CHEBI:57453"/>
        <dbReference type="ChEBI" id="CHEBI:83100"/>
        <dbReference type="ChEBI" id="CHEBI:83143"/>
        <dbReference type="EC" id="2.1.2.10"/>
    </reaction>
</comment>
<comment type="subunit">
    <text evidence="1">The glycine cleavage system is composed of four proteins: P, T, L and H.</text>
</comment>
<comment type="similarity">
    <text evidence="1">Belongs to the GcvT family.</text>
</comment>
<feature type="chain" id="PRO_1000114125" description="Aminomethyltransferase">
    <location>
        <begin position="1"/>
        <end position="369"/>
    </location>
</feature>
<gene>
    <name evidence="1" type="primary">gcvT</name>
    <name type="ordered locus">PXO_01654</name>
</gene>
<name>GCST_XANOP</name>
<accession>B2SSQ1</accession>
<evidence type="ECO:0000255" key="1">
    <source>
        <dbReference type="HAMAP-Rule" id="MF_00259"/>
    </source>
</evidence>